<keyword id="KW-0186">Copper</keyword>
<keyword id="KW-0249">Electron transport</keyword>
<keyword id="KW-0460">Magnesium</keyword>
<keyword id="KW-0472">Membrane</keyword>
<keyword id="KW-0479">Metal-binding</keyword>
<keyword id="KW-0496">Mitochondrion</keyword>
<keyword id="KW-0999">Mitochondrion inner membrane</keyword>
<keyword id="KW-1185">Reference proteome</keyword>
<keyword id="KW-0679">Respiratory chain</keyword>
<keyword id="KW-1278">Translocase</keyword>
<keyword id="KW-0812">Transmembrane</keyword>
<keyword id="KW-1133">Transmembrane helix</keyword>
<keyword id="KW-0813">Transport</keyword>
<name>COX2_YARLI</name>
<feature type="chain" id="PRO_0000006047" description="Cytochrome c oxidase subunit 2">
    <location>
        <begin position="1"/>
        <end position="242"/>
    </location>
</feature>
<feature type="topological domain" description="Mitochondrial intermembrane" evidence="3">
    <location>
        <begin position="7"/>
        <end position="33"/>
    </location>
</feature>
<feature type="transmembrane region" description="Helical" evidence="3">
    <location>
        <begin position="34"/>
        <end position="55"/>
    </location>
</feature>
<feature type="topological domain" description="Mitochondrial matrix" evidence="3">
    <location>
        <begin position="56"/>
        <end position="73"/>
    </location>
</feature>
<feature type="transmembrane region" description="Helical" evidence="3">
    <location>
        <begin position="74"/>
        <end position="98"/>
    </location>
</feature>
<feature type="topological domain" description="Mitochondrial intermembrane" evidence="3">
    <location>
        <begin position="99"/>
        <end position="242"/>
    </location>
</feature>
<feature type="binding site" evidence="2">
    <location>
        <position position="177"/>
    </location>
    <ligand>
        <name>Cu cation</name>
        <dbReference type="ChEBI" id="CHEBI:23378"/>
        <label>A1</label>
    </ligand>
</feature>
<feature type="binding site" evidence="2">
    <location>
        <position position="212"/>
    </location>
    <ligand>
        <name>Cu cation</name>
        <dbReference type="ChEBI" id="CHEBI:23378"/>
        <label>A1</label>
    </ligand>
</feature>
<feature type="binding site" evidence="2">
    <location>
        <position position="212"/>
    </location>
    <ligand>
        <name>Cu cation</name>
        <dbReference type="ChEBI" id="CHEBI:23378"/>
        <label>A2</label>
    </ligand>
</feature>
<feature type="binding site" evidence="2">
    <location>
        <position position="214"/>
    </location>
    <ligand>
        <name>Cu cation</name>
        <dbReference type="ChEBI" id="CHEBI:23378"/>
        <label>A2</label>
    </ligand>
</feature>
<feature type="binding site" evidence="2">
    <location>
        <position position="214"/>
    </location>
    <ligand>
        <name>Mg(2+)</name>
        <dbReference type="ChEBI" id="CHEBI:18420"/>
        <note>ligand shared with subunit 1</note>
    </ligand>
</feature>
<feature type="binding site" evidence="2">
    <location>
        <position position="216"/>
    </location>
    <ligand>
        <name>Cu cation</name>
        <dbReference type="ChEBI" id="CHEBI:23378"/>
        <label>A1</label>
    </ligand>
</feature>
<feature type="binding site" evidence="2">
    <location>
        <position position="216"/>
    </location>
    <ligand>
        <name>Cu cation</name>
        <dbReference type="ChEBI" id="CHEBI:23378"/>
        <label>A2</label>
    </ligand>
</feature>
<feature type="binding site" evidence="2">
    <location>
        <position position="220"/>
    </location>
    <ligand>
        <name>Cu cation</name>
        <dbReference type="ChEBI" id="CHEBI:23378"/>
        <label>A2</label>
    </ligand>
</feature>
<feature type="binding site" evidence="2">
    <location>
        <position position="223"/>
    </location>
    <ligand>
        <name>Cu cation</name>
        <dbReference type="ChEBI" id="CHEBI:23378"/>
        <label>A1</label>
    </ligand>
</feature>
<reference key="1">
    <citation type="journal article" date="2001" name="Comp. Funct. Genomics">
        <title>The complete mitochondrial genome of Yarrowia lipolytica.</title>
        <authorList>
            <person name="Kerscher S."/>
            <person name="Durstewitz G."/>
            <person name="Casaregola S."/>
            <person name="Gaillardin C."/>
            <person name="Brandt U."/>
        </authorList>
    </citation>
    <scope>NUCLEOTIDE SEQUENCE [LARGE SCALE GENOMIC DNA]</scope>
    <source>
        <strain>ATCC 20460 / W29 / CBS 7504 / IFP29</strain>
    </source>
</reference>
<sequence length="242" mass="27636">MFKIFNDVPVPYGLYFQDSATPTFDGIIELHDIVMFYIVVTIVLVSYLLFVIIKNFSNDHISYKYLTHGTTLEIVWTIFPVVILLFIAFPSFILLYLCDEVIDPAMTIKAIASQWYWTYEYSDFIGETGEIVQFDSYIVPTDMLENGQLRMLDVDARIVVPTNTHLRFIVTSRDVIHDFALPSLGIKCDATPGRLNQVSALLQRESVYYGQCSELCGVLHSSMPIALEAVSIDKFLSWLDEQ</sequence>
<protein>
    <recommendedName>
        <fullName>Cytochrome c oxidase subunit 2</fullName>
        <ecNumber>7.1.1.9</ecNumber>
    </recommendedName>
    <alternativeName>
        <fullName>Cytochrome c oxidase polypeptide II</fullName>
    </alternativeName>
</protein>
<evidence type="ECO:0000250" key="1"/>
<evidence type="ECO:0000250" key="2">
    <source>
        <dbReference type="UniProtKB" id="P00410"/>
    </source>
</evidence>
<evidence type="ECO:0000255" key="3"/>
<evidence type="ECO:0000305" key="4"/>
<organism>
    <name type="scientific">Yarrowia lipolytica (strain CLIB 122 / E 150)</name>
    <name type="common">Yeast</name>
    <name type="synonym">Candida lipolytica</name>
    <dbReference type="NCBI Taxonomy" id="284591"/>
    <lineage>
        <taxon>Eukaryota</taxon>
        <taxon>Fungi</taxon>
        <taxon>Dikarya</taxon>
        <taxon>Ascomycota</taxon>
        <taxon>Saccharomycotina</taxon>
        <taxon>Dipodascomycetes</taxon>
        <taxon>Dipodascales</taxon>
        <taxon>Dipodascales incertae sedis</taxon>
        <taxon>Yarrowia</taxon>
    </lineage>
</organism>
<comment type="function">
    <text evidence="2">Component of the cytochrome c oxidase, the last enzyme in the mitochondrial electron transport chain which drives oxidative phosphorylation. The respiratory chain contains 3 multisubunit complexes succinate dehydrogenase (complex II, CII), ubiquinol-cytochrome c oxidoreductase (cytochrome b-c1 complex, complex III, CIII) and cytochrome c oxidase (complex IV, CIV), that cooperate to transfer electrons derived from NADH and succinate to molecular oxygen, creating an electrochemical gradient over the inner membrane that drives transmembrane transport and the ATP synthase. Cytochrome c oxidase is the component of the respiratory chain that catalyzes the reduction of oxygen to water. Electrons originating from reduced cytochrome c in the intermembrane space (IMS) are transferred via the dinuclear copper A center (CU(A)) of subunit 2 and heme A of subunit 1 to the active site in subunit 1, a binuclear center (BNC) formed by heme A3 and copper B (CU(B)). The BNC reduces molecular oxygen to 2 water molecules using 4 electrons from cytochrome c in the IMS and 4 protons from the mitochondrial matrix.</text>
</comment>
<comment type="catalytic activity">
    <reaction evidence="2">
        <text>4 Fe(II)-[cytochrome c] + O2 + 8 H(+)(in) = 4 Fe(III)-[cytochrome c] + 2 H2O + 4 H(+)(out)</text>
        <dbReference type="Rhea" id="RHEA:11436"/>
        <dbReference type="Rhea" id="RHEA-COMP:10350"/>
        <dbReference type="Rhea" id="RHEA-COMP:14399"/>
        <dbReference type="ChEBI" id="CHEBI:15377"/>
        <dbReference type="ChEBI" id="CHEBI:15378"/>
        <dbReference type="ChEBI" id="CHEBI:15379"/>
        <dbReference type="ChEBI" id="CHEBI:29033"/>
        <dbReference type="ChEBI" id="CHEBI:29034"/>
        <dbReference type="EC" id="7.1.1.9"/>
    </reaction>
    <physiologicalReaction direction="left-to-right" evidence="2">
        <dbReference type="Rhea" id="RHEA:11437"/>
    </physiologicalReaction>
</comment>
<comment type="cofactor">
    <cofactor evidence="2">
        <name>Cu cation</name>
        <dbReference type="ChEBI" id="CHEBI:23378"/>
    </cofactor>
    <text evidence="2">Binds a dinuclear copper A center per subunit.</text>
</comment>
<comment type="subunit">
    <text evidence="2">Component of the cytochrome c oxidase (complex IV, CIV), a multisubunit enzyme composed of a catalytic core of 3 subunits and several supernumerary subunits. The complex exists as a monomer or a dimer and forms supercomplexes (SCs) in the inner mitochondrial membrane with ubiquinol-cytochrome c oxidoreductase (cytochrome b-c1 complex, complex III, CIII).</text>
</comment>
<comment type="subcellular location">
    <subcellularLocation>
        <location evidence="2">Mitochondrion inner membrane</location>
        <topology evidence="2">Multi-pass membrane protein</topology>
    </subcellularLocation>
</comment>
<comment type="PTM">
    <text evidence="1">The signal sequence of COX2 is processed by IMP1.</text>
</comment>
<comment type="similarity">
    <text evidence="4">Belongs to the cytochrome c oxidase subunit 2 family.</text>
</comment>
<gene>
    <name type="primary">COX2</name>
</gene>
<dbReference type="EC" id="7.1.1.9"/>
<dbReference type="EMBL" id="AJ307410">
    <property type="protein sequence ID" value="CAC28105.1"/>
    <property type="molecule type" value="Genomic_DNA"/>
</dbReference>
<dbReference type="RefSeq" id="NP_075438.2">
    <property type="nucleotide sequence ID" value="NC_002659.1"/>
</dbReference>
<dbReference type="SMR" id="Q9B6D5"/>
<dbReference type="FunCoup" id="Q9B6D5">
    <property type="interactions" value="236"/>
</dbReference>
<dbReference type="STRING" id="284591.Q9B6D5"/>
<dbReference type="GeneID" id="802608"/>
<dbReference type="KEGG" id="yli:802608"/>
<dbReference type="InParanoid" id="Q9B6D5"/>
<dbReference type="Proteomes" id="UP000001300">
    <property type="component" value="Mitochondrion"/>
</dbReference>
<dbReference type="GO" id="GO:0005743">
    <property type="term" value="C:mitochondrial inner membrane"/>
    <property type="evidence" value="ECO:0007669"/>
    <property type="project" value="UniProtKB-SubCell"/>
</dbReference>
<dbReference type="GO" id="GO:0005507">
    <property type="term" value="F:copper ion binding"/>
    <property type="evidence" value="ECO:0007669"/>
    <property type="project" value="InterPro"/>
</dbReference>
<dbReference type="GO" id="GO:0004129">
    <property type="term" value="F:cytochrome-c oxidase activity"/>
    <property type="evidence" value="ECO:0007669"/>
    <property type="project" value="UniProtKB-EC"/>
</dbReference>
<dbReference type="GO" id="GO:0042773">
    <property type="term" value="P:ATP synthesis coupled electron transport"/>
    <property type="evidence" value="ECO:0000318"/>
    <property type="project" value="GO_Central"/>
</dbReference>
<dbReference type="CDD" id="cd13912">
    <property type="entry name" value="CcO_II_C"/>
    <property type="match status" value="1"/>
</dbReference>
<dbReference type="FunFam" id="1.10.287.90:FF:000004">
    <property type="entry name" value="Cytochrome c oxidase subunit 2"/>
    <property type="match status" value="1"/>
</dbReference>
<dbReference type="FunFam" id="2.60.40.420:FF:000001">
    <property type="entry name" value="Cytochrome c oxidase subunit 2"/>
    <property type="match status" value="1"/>
</dbReference>
<dbReference type="Gene3D" id="1.10.287.90">
    <property type="match status" value="1"/>
</dbReference>
<dbReference type="Gene3D" id="2.60.40.420">
    <property type="entry name" value="Cupredoxins - blue copper proteins"/>
    <property type="match status" value="1"/>
</dbReference>
<dbReference type="InterPro" id="IPR045187">
    <property type="entry name" value="CcO_II"/>
</dbReference>
<dbReference type="InterPro" id="IPR002429">
    <property type="entry name" value="CcO_II-like_C"/>
</dbReference>
<dbReference type="InterPro" id="IPR034210">
    <property type="entry name" value="CcO_II_C"/>
</dbReference>
<dbReference type="InterPro" id="IPR001505">
    <property type="entry name" value="Copper_CuA"/>
</dbReference>
<dbReference type="InterPro" id="IPR008972">
    <property type="entry name" value="Cupredoxin"/>
</dbReference>
<dbReference type="InterPro" id="IPR014222">
    <property type="entry name" value="Cyt_c_oxidase_su2"/>
</dbReference>
<dbReference type="InterPro" id="IPR011759">
    <property type="entry name" value="Cyt_c_oxidase_su2_TM_dom"/>
</dbReference>
<dbReference type="InterPro" id="IPR036257">
    <property type="entry name" value="Cyt_c_oxidase_su2_TM_sf"/>
</dbReference>
<dbReference type="NCBIfam" id="TIGR02866">
    <property type="entry name" value="CoxB"/>
    <property type="match status" value="1"/>
</dbReference>
<dbReference type="PANTHER" id="PTHR22888:SF9">
    <property type="entry name" value="CYTOCHROME C OXIDASE SUBUNIT 2"/>
    <property type="match status" value="1"/>
</dbReference>
<dbReference type="PANTHER" id="PTHR22888">
    <property type="entry name" value="CYTOCHROME C OXIDASE, SUBUNIT II"/>
    <property type="match status" value="1"/>
</dbReference>
<dbReference type="Pfam" id="PF00116">
    <property type="entry name" value="COX2"/>
    <property type="match status" value="1"/>
</dbReference>
<dbReference type="Pfam" id="PF02790">
    <property type="entry name" value="COX2_TM"/>
    <property type="match status" value="1"/>
</dbReference>
<dbReference type="PRINTS" id="PR01166">
    <property type="entry name" value="CYCOXIDASEII"/>
</dbReference>
<dbReference type="SUPFAM" id="SSF49503">
    <property type="entry name" value="Cupredoxins"/>
    <property type="match status" value="1"/>
</dbReference>
<dbReference type="SUPFAM" id="SSF81464">
    <property type="entry name" value="Cytochrome c oxidase subunit II-like, transmembrane region"/>
    <property type="match status" value="1"/>
</dbReference>
<dbReference type="PROSITE" id="PS00078">
    <property type="entry name" value="COX2"/>
    <property type="match status" value="1"/>
</dbReference>
<dbReference type="PROSITE" id="PS50857">
    <property type="entry name" value="COX2_CUA"/>
    <property type="match status" value="1"/>
</dbReference>
<dbReference type="PROSITE" id="PS50999">
    <property type="entry name" value="COX2_TM"/>
    <property type="match status" value="1"/>
</dbReference>
<accession>Q9B6D5</accession>
<proteinExistence type="inferred from homology"/>
<geneLocation type="mitochondrion"/>